<gene>
    <name evidence="4" type="primary">OR5AP2</name>
</gene>
<reference key="1">
    <citation type="submission" date="2001-07" db="EMBL/GenBank/DDBJ databases">
        <title>Genome-wide discovery and analysis of human seven transmembrane helix receptor genes.</title>
        <authorList>
            <person name="Suwa M."/>
            <person name="Sato T."/>
            <person name="Okouchi I."/>
            <person name="Arita M."/>
            <person name="Futami K."/>
            <person name="Matsumoto S."/>
            <person name="Tsutsumi S."/>
            <person name="Aburatani H."/>
            <person name="Asai K."/>
            <person name="Akiyama Y."/>
        </authorList>
    </citation>
    <scope>NUCLEOTIDE SEQUENCE [GENOMIC DNA]</scope>
</reference>
<reference key="2">
    <citation type="submission" date="2005-07" db="EMBL/GenBank/DDBJ databases">
        <authorList>
            <person name="Mural R.J."/>
            <person name="Istrail S."/>
            <person name="Sutton G.G."/>
            <person name="Florea L."/>
            <person name="Halpern A.L."/>
            <person name="Mobarry C.M."/>
            <person name="Lippert R."/>
            <person name="Walenz B."/>
            <person name="Shatkay H."/>
            <person name="Dew I."/>
            <person name="Miller J.R."/>
            <person name="Flanigan M.J."/>
            <person name="Edwards N.J."/>
            <person name="Bolanos R."/>
            <person name="Fasulo D."/>
            <person name="Halldorsson B.V."/>
            <person name="Hannenhalli S."/>
            <person name="Turner R."/>
            <person name="Yooseph S."/>
            <person name="Lu F."/>
            <person name="Nusskern D.R."/>
            <person name="Shue B.C."/>
            <person name="Zheng X.H."/>
            <person name="Zhong F."/>
            <person name="Delcher A.L."/>
            <person name="Huson D.H."/>
            <person name="Kravitz S.A."/>
            <person name="Mouchard L."/>
            <person name="Reinert K."/>
            <person name="Remington K.A."/>
            <person name="Clark A.G."/>
            <person name="Waterman M.S."/>
            <person name="Eichler E.E."/>
            <person name="Adams M.D."/>
            <person name="Hunkapiller M.W."/>
            <person name="Myers E.W."/>
            <person name="Venter J.C."/>
        </authorList>
    </citation>
    <scope>NUCLEOTIDE SEQUENCE [LARGE SCALE GENOMIC DNA]</scope>
</reference>
<reference key="3">
    <citation type="journal article" date="2004" name="Genome Res.">
        <title>The status, quality, and expansion of the NIH full-length cDNA project: the Mammalian Gene Collection (MGC).</title>
        <authorList>
            <consortium name="The MGC Project Team"/>
        </authorList>
    </citation>
    <scope>NUCLEOTIDE SEQUENCE [LARGE SCALE MRNA]</scope>
</reference>
<dbReference type="EMBL" id="AB065854">
    <property type="protein sequence ID" value="BAC06072.1"/>
    <property type="molecule type" value="Genomic_DNA"/>
</dbReference>
<dbReference type="EMBL" id="CH471076">
    <property type="protein sequence ID" value="EAW73720.1"/>
    <property type="molecule type" value="Genomic_DNA"/>
</dbReference>
<dbReference type="EMBL" id="BC136989">
    <property type="protein sequence ID" value="AAI36990.1"/>
    <property type="molecule type" value="mRNA"/>
</dbReference>
<dbReference type="CCDS" id="CCDS31534.1"/>
<dbReference type="RefSeq" id="NP_001002925.1">
    <property type="nucleotide sequence ID" value="NM_001002925.1"/>
</dbReference>
<dbReference type="SMR" id="Q8NGF4"/>
<dbReference type="BioGRID" id="130780">
    <property type="interactions" value="4"/>
</dbReference>
<dbReference type="FunCoup" id="Q8NGF4">
    <property type="interactions" value="417"/>
</dbReference>
<dbReference type="STRING" id="9606.ENSP00000442701"/>
<dbReference type="GlyCosmos" id="Q8NGF4">
    <property type="glycosylation" value="1 site, No reported glycans"/>
</dbReference>
<dbReference type="GlyGen" id="Q8NGF4">
    <property type="glycosylation" value="1 site"/>
</dbReference>
<dbReference type="PhosphoSitePlus" id="Q8NGF4"/>
<dbReference type="BioMuta" id="OR5AP2"/>
<dbReference type="DMDM" id="37081351"/>
<dbReference type="PaxDb" id="9606-ENSP00000303111"/>
<dbReference type="Antibodypedia" id="58995">
    <property type="antibodies" value="49 antibodies from 16 providers"/>
</dbReference>
<dbReference type="DNASU" id="338675"/>
<dbReference type="Ensembl" id="ENST00000544374.3">
    <property type="protein sequence ID" value="ENSP00000442701.2"/>
    <property type="gene ID" value="ENSG00000172464.4"/>
</dbReference>
<dbReference type="GeneID" id="338675"/>
<dbReference type="KEGG" id="hsa:338675"/>
<dbReference type="MANE-Select" id="ENST00000544374.3">
    <property type="protein sequence ID" value="ENSP00000442701.2"/>
    <property type="RefSeq nucleotide sequence ID" value="NM_001002925.1"/>
    <property type="RefSeq protein sequence ID" value="NP_001002925.1"/>
</dbReference>
<dbReference type="UCSC" id="uc001njb.1">
    <property type="organism name" value="human"/>
</dbReference>
<dbReference type="AGR" id="HGNC:15258"/>
<dbReference type="CTD" id="338675"/>
<dbReference type="GeneCards" id="OR5AP2"/>
<dbReference type="HGNC" id="HGNC:15258">
    <property type="gene designation" value="OR5AP2"/>
</dbReference>
<dbReference type="HPA" id="ENSG00000172464">
    <property type="expression patterns" value="Not detected"/>
</dbReference>
<dbReference type="neXtProt" id="NX_Q8NGF4"/>
<dbReference type="PharmGKB" id="PA32469"/>
<dbReference type="VEuPathDB" id="HostDB:ENSG00000172464"/>
<dbReference type="eggNOG" id="ENOG502RF13">
    <property type="taxonomic scope" value="Eukaryota"/>
</dbReference>
<dbReference type="GeneTree" id="ENSGT01130000278309"/>
<dbReference type="HOGENOM" id="CLU_012526_0_1_1"/>
<dbReference type="InParanoid" id="Q8NGF4"/>
<dbReference type="OMA" id="MRLMKEV"/>
<dbReference type="OrthoDB" id="9575991at2759"/>
<dbReference type="PAN-GO" id="Q8NGF4">
    <property type="GO annotations" value="4 GO annotations based on evolutionary models"/>
</dbReference>
<dbReference type="PhylomeDB" id="Q8NGF4"/>
<dbReference type="TreeFam" id="TF352753"/>
<dbReference type="PathwayCommons" id="Q8NGF4"/>
<dbReference type="Reactome" id="R-HSA-9752946">
    <property type="pathway name" value="Expression and translocation of olfactory receptors"/>
</dbReference>
<dbReference type="BioGRID-ORCS" id="338675">
    <property type="hits" value="6 hits in 747 CRISPR screens"/>
</dbReference>
<dbReference type="GenomeRNAi" id="338675"/>
<dbReference type="Pharos" id="Q8NGF4">
    <property type="development level" value="Tdark"/>
</dbReference>
<dbReference type="PRO" id="PR:Q8NGF4"/>
<dbReference type="Proteomes" id="UP000005640">
    <property type="component" value="Chromosome 11"/>
</dbReference>
<dbReference type="RNAct" id="Q8NGF4">
    <property type="molecule type" value="protein"/>
</dbReference>
<dbReference type="Bgee" id="ENSG00000172464">
    <property type="expression patterns" value="Expressed in male germ line stem cell (sensu Vertebrata) in testis"/>
</dbReference>
<dbReference type="GO" id="GO:0005886">
    <property type="term" value="C:plasma membrane"/>
    <property type="evidence" value="ECO:0007669"/>
    <property type="project" value="UniProtKB-SubCell"/>
</dbReference>
<dbReference type="GO" id="GO:0004930">
    <property type="term" value="F:G protein-coupled receptor activity"/>
    <property type="evidence" value="ECO:0007669"/>
    <property type="project" value="UniProtKB-KW"/>
</dbReference>
<dbReference type="GO" id="GO:0005549">
    <property type="term" value="F:odorant binding"/>
    <property type="evidence" value="ECO:0000318"/>
    <property type="project" value="GO_Central"/>
</dbReference>
<dbReference type="GO" id="GO:0004984">
    <property type="term" value="F:olfactory receptor activity"/>
    <property type="evidence" value="ECO:0000318"/>
    <property type="project" value="GO_Central"/>
</dbReference>
<dbReference type="GO" id="GO:0007186">
    <property type="term" value="P:G protein-coupled receptor signaling pathway"/>
    <property type="evidence" value="ECO:0000318"/>
    <property type="project" value="GO_Central"/>
</dbReference>
<dbReference type="GO" id="GO:0007608">
    <property type="term" value="P:sensory perception of smell"/>
    <property type="evidence" value="ECO:0000318"/>
    <property type="project" value="GO_Central"/>
</dbReference>
<dbReference type="CDD" id="cd15943">
    <property type="entry name" value="7tmA_OR5AP2-like"/>
    <property type="match status" value="1"/>
</dbReference>
<dbReference type="FunFam" id="1.10.1220.70:FF:000001">
    <property type="entry name" value="Olfactory receptor"/>
    <property type="match status" value="1"/>
</dbReference>
<dbReference type="FunFam" id="1.20.1070.10:FF:000003">
    <property type="entry name" value="Olfactory receptor"/>
    <property type="match status" value="1"/>
</dbReference>
<dbReference type="Gene3D" id="1.20.1070.10">
    <property type="entry name" value="Rhodopsin 7-helix transmembrane proteins"/>
    <property type="match status" value="1"/>
</dbReference>
<dbReference type="InterPro" id="IPR000276">
    <property type="entry name" value="GPCR_Rhodpsn"/>
</dbReference>
<dbReference type="InterPro" id="IPR017452">
    <property type="entry name" value="GPCR_Rhodpsn_7TM"/>
</dbReference>
<dbReference type="InterPro" id="IPR000725">
    <property type="entry name" value="Olfact_rcpt"/>
</dbReference>
<dbReference type="PANTHER" id="PTHR48018">
    <property type="entry name" value="OLFACTORY RECEPTOR"/>
    <property type="match status" value="1"/>
</dbReference>
<dbReference type="Pfam" id="PF13853">
    <property type="entry name" value="7tm_4"/>
    <property type="match status" value="1"/>
</dbReference>
<dbReference type="PRINTS" id="PR00237">
    <property type="entry name" value="GPCRRHODOPSN"/>
</dbReference>
<dbReference type="PRINTS" id="PR00245">
    <property type="entry name" value="OLFACTORYR"/>
</dbReference>
<dbReference type="SUPFAM" id="SSF81321">
    <property type="entry name" value="Family A G protein-coupled receptor-like"/>
    <property type="match status" value="1"/>
</dbReference>
<dbReference type="PROSITE" id="PS00237">
    <property type="entry name" value="G_PROTEIN_RECEP_F1_1"/>
    <property type="match status" value="1"/>
</dbReference>
<dbReference type="PROSITE" id="PS50262">
    <property type="entry name" value="G_PROTEIN_RECEP_F1_2"/>
    <property type="match status" value="1"/>
</dbReference>
<accession>Q8NGF4</accession>
<accession>B2RNM8</accession>
<feature type="chain" id="PRO_0000150578" description="Olfactory receptor 5AP2">
    <location>
        <begin position="1"/>
        <end position="316"/>
    </location>
</feature>
<feature type="topological domain" description="Extracellular" evidence="1">
    <location>
        <begin position="1"/>
        <end position="34"/>
    </location>
</feature>
<feature type="transmembrane region" description="Helical; Name=1" evidence="1">
    <location>
        <begin position="35"/>
        <end position="55"/>
    </location>
</feature>
<feature type="topological domain" description="Cytoplasmic" evidence="1">
    <location>
        <position position="56"/>
    </location>
</feature>
<feature type="transmembrane region" description="Helical; Name=2" evidence="1">
    <location>
        <begin position="57"/>
        <end position="77"/>
    </location>
</feature>
<feature type="topological domain" description="Extracellular" evidence="1">
    <location>
        <begin position="78"/>
        <end position="104"/>
    </location>
</feature>
<feature type="transmembrane region" description="Helical; Name=3" evidence="1">
    <location>
        <begin position="105"/>
        <end position="125"/>
    </location>
</feature>
<feature type="topological domain" description="Cytoplasmic" evidence="1">
    <location>
        <begin position="126"/>
        <end position="135"/>
    </location>
</feature>
<feature type="transmembrane region" description="Helical; Name=4" evidence="1">
    <location>
        <begin position="136"/>
        <end position="156"/>
    </location>
</feature>
<feature type="topological domain" description="Extracellular" evidence="1">
    <location>
        <begin position="157"/>
        <end position="210"/>
    </location>
</feature>
<feature type="transmembrane region" description="Helical; Name=5" evidence="1">
    <location>
        <begin position="211"/>
        <end position="231"/>
    </location>
</feature>
<feature type="topological domain" description="Cytoplasmic" evidence="1">
    <location>
        <begin position="232"/>
        <end position="245"/>
    </location>
</feature>
<feature type="transmembrane region" description="Helical; Name=6" evidence="1">
    <location>
        <begin position="246"/>
        <end position="266"/>
    </location>
</feature>
<feature type="topological domain" description="Extracellular" evidence="1">
    <location>
        <begin position="267"/>
        <end position="278"/>
    </location>
</feature>
<feature type="transmembrane region" description="Helical; Name=7" evidence="1">
    <location>
        <begin position="279"/>
        <end position="299"/>
    </location>
</feature>
<feature type="topological domain" description="Cytoplasmic" evidence="1">
    <location>
        <begin position="300"/>
        <end position="316"/>
    </location>
</feature>
<feature type="glycosylation site" description="N-linked (GlcNAc...) asparagine" evidence="1">
    <location>
        <position position="11"/>
    </location>
</feature>
<feature type="disulfide bond" evidence="2">
    <location>
        <begin position="103"/>
        <end position="195"/>
    </location>
</feature>
<feature type="sequence variant" id="VAR_053180" description="In dbSNP:rs11606499.">
    <original>A</original>
    <variation>T</variation>
    <location>
        <position position="105"/>
    </location>
</feature>
<proteinExistence type="evidence at transcript level"/>
<comment type="function">
    <text evidence="3">Odorant receptor.</text>
</comment>
<comment type="subcellular location">
    <subcellularLocation>
        <location evidence="3">Cell membrane</location>
        <topology evidence="1">Multi-pass membrane protein</topology>
    </subcellularLocation>
</comment>
<comment type="similarity">
    <text evidence="2">Belongs to the G-protein coupled receptor 1 family.</text>
</comment>
<comment type="online information" name="Human Olfactory Receptor Data Exploratorium (HORDE)">
    <link uri="http://genome.weizmann.ac.il/horde/card/index/symbol:OR5AP2"/>
</comment>
<name>O5AP2_HUMAN</name>
<keyword id="KW-1003">Cell membrane</keyword>
<keyword id="KW-1015">Disulfide bond</keyword>
<keyword id="KW-0297">G-protein coupled receptor</keyword>
<keyword id="KW-0325">Glycoprotein</keyword>
<keyword id="KW-0472">Membrane</keyword>
<keyword id="KW-0552">Olfaction</keyword>
<keyword id="KW-0675">Receptor</keyword>
<keyword id="KW-1185">Reference proteome</keyword>
<keyword id="KW-0716">Sensory transduction</keyword>
<keyword id="KW-0807">Transducer</keyword>
<keyword id="KW-0812">Transmembrane</keyword>
<keyword id="KW-1133">Transmembrane helix</keyword>
<protein>
    <recommendedName>
        <fullName evidence="3">Olfactory receptor 5AP2</fullName>
    </recommendedName>
</protein>
<sequence length="316" mass="35508">MRLMKEVRGRNQTEVTEFLLLGLSDNPDLQGVLFALFLLIYMANMVGNLGMIVLIKIDLCLHTPMYFFLSSLSFVDASYSSSVTPKMLVNLMAENKAISFHGCAAQFYFFGSFLGTECFLLAMMAYDRYAAIWNPLLYPVLVSGRICFLLIATSFLAGCGNAAIHTGMTFRLSFCGSNRINHFYCDTPPLLKLSCSDTHFNGIVIMAFSSFIVISCVMIVLISYLCIFIAVLKMPSLEGRHKAFSTCASYLMAVTIFFGTILFMYLRPTSSYSMEQDKVVSVFYTVIIPVLNPLIYSLKNKDVKKALKKILWKHIL</sequence>
<evidence type="ECO:0000255" key="1"/>
<evidence type="ECO:0000255" key="2">
    <source>
        <dbReference type="PROSITE-ProRule" id="PRU00521"/>
    </source>
</evidence>
<evidence type="ECO:0000305" key="3"/>
<evidence type="ECO:0000312" key="4">
    <source>
        <dbReference type="HGNC" id="HGNC:15258"/>
    </source>
</evidence>
<organism>
    <name type="scientific">Homo sapiens</name>
    <name type="common">Human</name>
    <dbReference type="NCBI Taxonomy" id="9606"/>
    <lineage>
        <taxon>Eukaryota</taxon>
        <taxon>Metazoa</taxon>
        <taxon>Chordata</taxon>
        <taxon>Craniata</taxon>
        <taxon>Vertebrata</taxon>
        <taxon>Euteleostomi</taxon>
        <taxon>Mammalia</taxon>
        <taxon>Eutheria</taxon>
        <taxon>Euarchontoglires</taxon>
        <taxon>Primates</taxon>
        <taxon>Haplorrhini</taxon>
        <taxon>Catarrhini</taxon>
        <taxon>Hominidae</taxon>
        <taxon>Homo</taxon>
    </lineage>
</organism>